<accession>P74106</accession>
<proteinExistence type="inferred from homology"/>
<sequence length="261" mass="27974">MTLAKRILPCLDVNAGRVVKGINFVDLQDAGDPVELARAYNEAGADELVFLDITATHEQRDTIIDVVYRTAEEVFIPLTVGGGISTLEHIKNLLRAGADKVSVNSSAVRDPDFISRASDRFGRQCIVVAIDARRRLDADNPGWDVYVRGGRENTGLDAIAWAEEVAKRGAGELLVTSMDGDGTQAGYDLALTAAIAERVEIPVIASGGAGNCQHVYEAFTEGKAEAALLASLLHYGQLTIGELKTFLEARQIPVRHTAVCG</sequence>
<dbReference type="EC" id="4.3.2.10"/>
<dbReference type="EMBL" id="BA000022">
    <property type="protein sequence ID" value="BAA18192.1"/>
    <property type="molecule type" value="Genomic_DNA"/>
</dbReference>
<dbReference type="PIR" id="S75631">
    <property type="entry name" value="S75631"/>
</dbReference>
<dbReference type="SMR" id="P74106"/>
<dbReference type="FunCoup" id="P74106">
    <property type="interactions" value="465"/>
</dbReference>
<dbReference type="STRING" id="1148.gene:10499065"/>
<dbReference type="PaxDb" id="1148-1653277"/>
<dbReference type="EnsemblBacteria" id="BAA18192">
    <property type="protein sequence ID" value="BAA18192"/>
    <property type="gene ID" value="BAA18192"/>
</dbReference>
<dbReference type="KEGG" id="syn:sll1893"/>
<dbReference type="eggNOG" id="COG0107">
    <property type="taxonomic scope" value="Bacteria"/>
</dbReference>
<dbReference type="InParanoid" id="P74106"/>
<dbReference type="PhylomeDB" id="P74106"/>
<dbReference type="UniPathway" id="UPA00031">
    <property type="reaction ID" value="UER00010"/>
</dbReference>
<dbReference type="Proteomes" id="UP000001425">
    <property type="component" value="Chromosome"/>
</dbReference>
<dbReference type="GO" id="GO:0005737">
    <property type="term" value="C:cytoplasm"/>
    <property type="evidence" value="ECO:0007669"/>
    <property type="project" value="UniProtKB-SubCell"/>
</dbReference>
<dbReference type="GO" id="GO:0000107">
    <property type="term" value="F:imidazoleglycerol-phosphate synthase activity"/>
    <property type="evidence" value="ECO:0000318"/>
    <property type="project" value="GO_Central"/>
</dbReference>
<dbReference type="GO" id="GO:0016829">
    <property type="term" value="F:lyase activity"/>
    <property type="evidence" value="ECO:0007669"/>
    <property type="project" value="UniProtKB-KW"/>
</dbReference>
<dbReference type="GO" id="GO:0000105">
    <property type="term" value="P:L-histidine biosynthetic process"/>
    <property type="evidence" value="ECO:0007669"/>
    <property type="project" value="UniProtKB-UniRule"/>
</dbReference>
<dbReference type="CDD" id="cd04731">
    <property type="entry name" value="HisF"/>
    <property type="match status" value="1"/>
</dbReference>
<dbReference type="FunFam" id="3.20.20.70:FF:000006">
    <property type="entry name" value="Imidazole glycerol phosphate synthase subunit HisF"/>
    <property type="match status" value="1"/>
</dbReference>
<dbReference type="Gene3D" id="3.20.20.70">
    <property type="entry name" value="Aldolase class I"/>
    <property type="match status" value="1"/>
</dbReference>
<dbReference type="HAMAP" id="MF_01013">
    <property type="entry name" value="HisF"/>
    <property type="match status" value="1"/>
</dbReference>
<dbReference type="InterPro" id="IPR013785">
    <property type="entry name" value="Aldolase_TIM"/>
</dbReference>
<dbReference type="InterPro" id="IPR006062">
    <property type="entry name" value="His_biosynth"/>
</dbReference>
<dbReference type="InterPro" id="IPR004651">
    <property type="entry name" value="HisF"/>
</dbReference>
<dbReference type="InterPro" id="IPR050064">
    <property type="entry name" value="IGPS_HisA/HisF"/>
</dbReference>
<dbReference type="InterPro" id="IPR011060">
    <property type="entry name" value="RibuloseP-bd_barrel"/>
</dbReference>
<dbReference type="NCBIfam" id="TIGR00735">
    <property type="entry name" value="hisF"/>
    <property type="match status" value="1"/>
</dbReference>
<dbReference type="PANTHER" id="PTHR21235:SF2">
    <property type="entry name" value="IMIDAZOLE GLYCEROL PHOSPHATE SYNTHASE HISHF"/>
    <property type="match status" value="1"/>
</dbReference>
<dbReference type="PANTHER" id="PTHR21235">
    <property type="entry name" value="IMIDAZOLE GLYCEROL PHOSPHATE SYNTHASE SUBUNIT HISF/H IGP SYNTHASE SUBUNIT HISF/H"/>
    <property type="match status" value="1"/>
</dbReference>
<dbReference type="Pfam" id="PF00977">
    <property type="entry name" value="His_biosynth"/>
    <property type="match status" value="1"/>
</dbReference>
<dbReference type="SUPFAM" id="SSF51366">
    <property type="entry name" value="Ribulose-phoshate binding barrel"/>
    <property type="match status" value="1"/>
</dbReference>
<protein>
    <recommendedName>
        <fullName>Imidazole glycerol phosphate synthase subunit HisF</fullName>
        <ecNumber>4.3.2.10</ecNumber>
    </recommendedName>
    <alternativeName>
        <fullName>IGP synthase cyclase subunit</fullName>
    </alternativeName>
    <alternativeName>
        <fullName>IGP synthase subunit HisF</fullName>
    </alternativeName>
    <alternativeName>
        <fullName>ImGP synthase subunit HisF</fullName>
        <shortName>IGPS subunit HisF</shortName>
    </alternativeName>
</protein>
<evidence type="ECO:0000250" key="1"/>
<evidence type="ECO:0000255" key="2"/>
<evidence type="ECO:0000305" key="3"/>
<gene>
    <name type="primary">hisF</name>
    <name type="ordered locus">sll1893</name>
</gene>
<comment type="function">
    <text evidence="1">IGPS catalyzes the conversion of PRFAR and glutamine to IGP, AICAR and glutamate. The HisF subunit catalyzes the cyclization activity that produces IGP and AICAR from PRFAR using the ammonia provided by the HisH subunit (By similarity).</text>
</comment>
<comment type="catalytic activity">
    <reaction>
        <text>5-[(5-phospho-1-deoxy-D-ribulos-1-ylimino)methylamino]-1-(5-phospho-beta-D-ribosyl)imidazole-4-carboxamide + L-glutamine = D-erythro-1-(imidazol-4-yl)glycerol 3-phosphate + 5-amino-1-(5-phospho-beta-D-ribosyl)imidazole-4-carboxamide + L-glutamate + H(+)</text>
        <dbReference type="Rhea" id="RHEA:24793"/>
        <dbReference type="ChEBI" id="CHEBI:15378"/>
        <dbReference type="ChEBI" id="CHEBI:29985"/>
        <dbReference type="ChEBI" id="CHEBI:58278"/>
        <dbReference type="ChEBI" id="CHEBI:58359"/>
        <dbReference type="ChEBI" id="CHEBI:58475"/>
        <dbReference type="ChEBI" id="CHEBI:58525"/>
        <dbReference type="EC" id="4.3.2.10"/>
    </reaction>
</comment>
<comment type="pathway">
    <text>Amino-acid biosynthesis; L-histidine biosynthesis; L-histidine from 5-phospho-alpha-D-ribose 1-diphosphate: step 5/9.</text>
</comment>
<comment type="subunit">
    <text evidence="1">Heterodimer of HisH and HisF.</text>
</comment>
<comment type="subcellular location">
    <subcellularLocation>
        <location evidence="1">Cytoplasm</location>
    </subcellularLocation>
</comment>
<comment type="similarity">
    <text evidence="3">Belongs to the HisA/HisF family.</text>
</comment>
<reference key="1">
    <citation type="journal article" date="1996" name="DNA Res.">
        <title>Sequence analysis of the genome of the unicellular cyanobacterium Synechocystis sp. strain PCC6803. II. Sequence determination of the entire genome and assignment of potential protein-coding regions.</title>
        <authorList>
            <person name="Kaneko T."/>
            <person name="Sato S."/>
            <person name="Kotani H."/>
            <person name="Tanaka A."/>
            <person name="Asamizu E."/>
            <person name="Nakamura Y."/>
            <person name="Miyajima N."/>
            <person name="Hirosawa M."/>
            <person name="Sugiura M."/>
            <person name="Sasamoto S."/>
            <person name="Kimura T."/>
            <person name="Hosouchi T."/>
            <person name="Matsuno A."/>
            <person name="Muraki A."/>
            <person name="Nakazaki N."/>
            <person name="Naruo K."/>
            <person name="Okumura S."/>
            <person name="Shimpo S."/>
            <person name="Takeuchi C."/>
            <person name="Wada T."/>
            <person name="Watanabe A."/>
            <person name="Yamada M."/>
            <person name="Yasuda M."/>
            <person name="Tabata S."/>
        </authorList>
    </citation>
    <scope>NUCLEOTIDE SEQUENCE [LARGE SCALE GENOMIC DNA]</scope>
    <source>
        <strain>ATCC 27184 / PCC 6803 / Kazusa</strain>
    </source>
</reference>
<name>HIS6_SYNY3</name>
<feature type="chain" id="PRO_0000142249" description="Imidazole glycerol phosphate synthase subunit HisF">
    <location>
        <begin position="1"/>
        <end position="261"/>
    </location>
</feature>
<feature type="active site" evidence="2">
    <location>
        <position position="12"/>
    </location>
</feature>
<feature type="active site" evidence="2">
    <location>
        <position position="131"/>
    </location>
</feature>
<keyword id="KW-0028">Amino-acid biosynthesis</keyword>
<keyword id="KW-0963">Cytoplasm</keyword>
<keyword id="KW-0368">Histidine biosynthesis</keyword>
<keyword id="KW-0456">Lyase</keyword>
<keyword id="KW-1185">Reference proteome</keyword>
<organism>
    <name type="scientific">Synechocystis sp. (strain ATCC 27184 / PCC 6803 / Kazusa)</name>
    <dbReference type="NCBI Taxonomy" id="1111708"/>
    <lineage>
        <taxon>Bacteria</taxon>
        <taxon>Bacillati</taxon>
        <taxon>Cyanobacteriota</taxon>
        <taxon>Cyanophyceae</taxon>
        <taxon>Synechococcales</taxon>
        <taxon>Merismopediaceae</taxon>
        <taxon>Synechocystis</taxon>
    </lineage>
</organism>